<name>SYFB_SYNJA</name>
<sequence length="825" mass="90375">MRISLKWLRELVDFELSPEELAEALTLVGFEVEEIEDRRSWAEGVVLGRILAAEPHPNADKLRVCQVDLGSEQPATIVCGAANARAGLLVPVATPGTHLPAVNLTIAKAEKRGVLSEGMICSLAELGLERASEGIHEFPPDLDLKAHPLGSDARPLLGLDDVVLDLTSTANRADALSMVGIAREVAALTRNPLRLPPVQPLQAKPIPNFNLRIADAKACPAYSGVLIEGVKVGPSPDWLKHRLAAAGMRSINNVVDVTNLILLEWGQPLHAFDWDRLLQVMGKKKPTIEVRFAQAGETLKTLDGQTRTLHPESHLIVAGGQPVALAGVMGGEETEVSSATTSIFLEAALFDPVVTRRSARSQGLRTEASARYERGVNFATLDLARDRAVQLILELAGGSVVGLTTFDQRPPLERTLKLRLSRLIDVLGEEVRPEDVEEILPALGFQLSRCQAVAPEAPPLPATETAGVAGCVWQVSVPPYRLRDVEREIDLIEEFARLYGYDRFSETLPTEPQVGSLSARETLTRQIREVMRGIGLTEVYHISLCPAEEDSSLVKIANPLSPEYSAVRKALLPGLVEAFRFNWDQGNGPLQAFEIGHVFAYAPPSSPEPYQEAEHLGGILGGDLNPNDWRHHSRPMDWFEAKGLLVSALERLGFTSEFRPDPPEAQSPLLHPGRQAGIWIEGSRIGLFGQLHPRLCQEKDLPEEVYGFEVDLDPLLASLEKRGLVQFSPFSPFPASDRDIAFFAPLELSVADIEKVIRQAAGPLLQSVQLFDEYRGQGVPPGQRSLAFRLVYRAPDRTLTDAEVEAAQNQVRAQLEKHFPVTLRS</sequence>
<dbReference type="EC" id="6.1.1.20" evidence="1"/>
<dbReference type="EMBL" id="CP000239">
    <property type="protein sequence ID" value="ABC98530.1"/>
    <property type="molecule type" value="Genomic_DNA"/>
</dbReference>
<dbReference type="RefSeq" id="WP_011429219.1">
    <property type="nucleotide sequence ID" value="NC_007775.1"/>
</dbReference>
<dbReference type="SMR" id="Q2JXF6"/>
<dbReference type="STRING" id="321327.CYA_0309"/>
<dbReference type="KEGG" id="cya:CYA_0309"/>
<dbReference type="eggNOG" id="COG0072">
    <property type="taxonomic scope" value="Bacteria"/>
</dbReference>
<dbReference type="HOGENOM" id="CLU_016891_0_0_3"/>
<dbReference type="OrthoDB" id="9805455at2"/>
<dbReference type="Proteomes" id="UP000008818">
    <property type="component" value="Chromosome"/>
</dbReference>
<dbReference type="GO" id="GO:0009328">
    <property type="term" value="C:phenylalanine-tRNA ligase complex"/>
    <property type="evidence" value="ECO:0007669"/>
    <property type="project" value="TreeGrafter"/>
</dbReference>
<dbReference type="GO" id="GO:0005524">
    <property type="term" value="F:ATP binding"/>
    <property type="evidence" value="ECO:0007669"/>
    <property type="project" value="UniProtKB-UniRule"/>
</dbReference>
<dbReference type="GO" id="GO:0000287">
    <property type="term" value="F:magnesium ion binding"/>
    <property type="evidence" value="ECO:0007669"/>
    <property type="project" value="UniProtKB-UniRule"/>
</dbReference>
<dbReference type="GO" id="GO:0004826">
    <property type="term" value="F:phenylalanine-tRNA ligase activity"/>
    <property type="evidence" value="ECO:0007669"/>
    <property type="project" value="UniProtKB-UniRule"/>
</dbReference>
<dbReference type="GO" id="GO:0000049">
    <property type="term" value="F:tRNA binding"/>
    <property type="evidence" value="ECO:0007669"/>
    <property type="project" value="UniProtKB-KW"/>
</dbReference>
<dbReference type="GO" id="GO:0006432">
    <property type="term" value="P:phenylalanyl-tRNA aminoacylation"/>
    <property type="evidence" value="ECO:0007669"/>
    <property type="project" value="UniProtKB-UniRule"/>
</dbReference>
<dbReference type="CDD" id="cd00769">
    <property type="entry name" value="PheRS_beta_core"/>
    <property type="match status" value="1"/>
</dbReference>
<dbReference type="CDD" id="cd02796">
    <property type="entry name" value="tRNA_bind_bactPheRS"/>
    <property type="match status" value="1"/>
</dbReference>
<dbReference type="FunFam" id="2.40.50.140:FF:000045">
    <property type="entry name" value="Phenylalanine--tRNA ligase beta subunit"/>
    <property type="match status" value="1"/>
</dbReference>
<dbReference type="FunFam" id="3.30.70.380:FF:000001">
    <property type="entry name" value="Phenylalanine--tRNA ligase beta subunit"/>
    <property type="match status" value="1"/>
</dbReference>
<dbReference type="Gene3D" id="3.30.56.10">
    <property type="match status" value="2"/>
</dbReference>
<dbReference type="Gene3D" id="3.30.930.10">
    <property type="entry name" value="Bira Bifunctional Protein, Domain 2"/>
    <property type="match status" value="1"/>
</dbReference>
<dbReference type="Gene3D" id="3.30.70.380">
    <property type="entry name" value="Ferrodoxin-fold anticodon-binding domain"/>
    <property type="match status" value="1"/>
</dbReference>
<dbReference type="Gene3D" id="2.40.50.140">
    <property type="entry name" value="Nucleic acid-binding proteins"/>
    <property type="match status" value="1"/>
</dbReference>
<dbReference type="Gene3D" id="3.50.40.10">
    <property type="entry name" value="Phenylalanyl-trna Synthetase, Chain B, domain 3"/>
    <property type="match status" value="1"/>
</dbReference>
<dbReference type="HAMAP" id="MF_00283">
    <property type="entry name" value="Phe_tRNA_synth_beta1"/>
    <property type="match status" value="1"/>
</dbReference>
<dbReference type="InterPro" id="IPR045864">
    <property type="entry name" value="aa-tRNA-synth_II/BPL/LPL"/>
</dbReference>
<dbReference type="InterPro" id="IPR005146">
    <property type="entry name" value="B3/B4_tRNA-bd"/>
</dbReference>
<dbReference type="InterPro" id="IPR009061">
    <property type="entry name" value="DNA-bd_dom_put_sf"/>
</dbReference>
<dbReference type="InterPro" id="IPR005121">
    <property type="entry name" value="Fdx_antiC-bd"/>
</dbReference>
<dbReference type="InterPro" id="IPR036690">
    <property type="entry name" value="Fdx_antiC-bd_sf"/>
</dbReference>
<dbReference type="InterPro" id="IPR012340">
    <property type="entry name" value="NA-bd_OB-fold"/>
</dbReference>
<dbReference type="InterPro" id="IPR045060">
    <property type="entry name" value="Phe-tRNA-ligase_IIc_bsu"/>
</dbReference>
<dbReference type="InterPro" id="IPR004532">
    <property type="entry name" value="Phe-tRNA-ligase_IIc_bsu_bact"/>
</dbReference>
<dbReference type="InterPro" id="IPR020825">
    <property type="entry name" value="Phe-tRNA_synthase-like_B3/B4"/>
</dbReference>
<dbReference type="InterPro" id="IPR041616">
    <property type="entry name" value="PheRS_beta_core"/>
</dbReference>
<dbReference type="InterPro" id="IPR002547">
    <property type="entry name" value="tRNA-bd_dom"/>
</dbReference>
<dbReference type="InterPro" id="IPR033714">
    <property type="entry name" value="tRNA_bind_bactPheRS"/>
</dbReference>
<dbReference type="InterPro" id="IPR005147">
    <property type="entry name" value="tRNA_synthase_B5-dom"/>
</dbReference>
<dbReference type="NCBIfam" id="TIGR00472">
    <property type="entry name" value="pheT_bact"/>
    <property type="match status" value="1"/>
</dbReference>
<dbReference type="NCBIfam" id="NF045760">
    <property type="entry name" value="YtpR"/>
    <property type="match status" value="1"/>
</dbReference>
<dbReference type="PANTHER" id="PTHR10947:SF0">
    <property type="entry name" value="PHENYLALANINE--TRNA LIGASE BETA SUBUNIT"/>
    <property type="match status" value="1"/>
</dbReference>
<dbReference type="PANTHER" id="PTHR10947">
    <property type="entry name" value="PHENYLALANYL-TRNA SYNTHETASE BETA CHAIN AND LEUCINE-RICH REPEAT-CONTAINING PROTEIN 47"/>
    <property type="match status" value="1"/>
</dbReference>
<dbReference type="Pfam" id="PF03483">
    <property type="entry name" value="B3_4"/>
    <property type="match status" value="1"/>
</dbReference>
<dbReference type="Pfam" id="PF03484">
    <property type="entry name" value="B5"/>
    <property type="match status" value="1"/>
</dbReference>
<dbReference type="Pfam" id="PF03147">
    <property type="entry name" value="FDX-ACB"/>
    <property type="match status" value="1"/>
</dbReference>
<dbReference type="Pfam" id="PF01588">
    <property type="entry name" value="tRNA_bind"/>
    <property type="match status" value="1"/>
</dbReference>
<dbReference type="Pfam" id="PF17759">
    <property type="entry name" value="tRNA_synthFbeta"/>
    <property type="match status" value="1"/>
</dbReference>
<dbReference type="SMART" id="SM00873">
    <property type="entry name" value="B3_4"/>
    <property type="match status" value="1"/>
</dbReference>
<dbReference type="SMART" id="SM00874">
    <property type="entry name" value="B5"/>
    <property type="match status" value="1"/>
</dbReference>
<dbReference type="SMART" id="SM00896">
    <property type="entry name" value="FDX-ACB"/>
    <property type="match status" value="1"/>
</dbReference>
<dbReference type="SUPFAM" id="SSF54991">
    <property type="entry name" value="Anticodon-binding domain of PheRS"/>
    <property type="match status" value="1"/>
</dbReference>
<dbReference type="SUPFAM" id="SSF55681">
    <property type="entry name" value="Class II aaRS and biotin synthetases"/>
    <property type="match status" value="1"/>
</dbReference>
<dbReference type="SUPFAM" id="SSF50249">
    <property type="entry name" value="Nucleic acid-binding proteins"/>
    <property type="match status" value="1"/>
</dbReference>
<dbReference type="SUPFAM" id="SSF56037">
    <property type="entry name" value="PheT/TilS domain"/>
    <property type="match status" value="1"/>
</dbReference>
<dbReference type="SUPFAM" id="SSF46955">
    <property type="entry name" value="Putative DNA-binding domain"/>
    <property type="match status" value="1"/>
</dbReference>
<dbReference type="PROSITE" id="PS51483">
    <property type="entry name" value="B5"/>
    <property type="match status" value="1"/>
</dbReference>
<dbReference type="PROSITE" id="PS51447">
    <property type="entry name" value="FDX_ACB"/>
    <property type="match status" value="1"/>
</dbReference>
<dbReference type="PROSITE" id="PS50886">
    <property type="entry name" value="TRBD"/>
    <property type="match status" value="1"/>
</dbReference>
<reference key="1">
    <citation type="journal article" date="2007" name="ISME J.">
        <title>Population level functional diversity in a microbial community revealed by comparative genomic and metagenomic analyses.</title>
        <authorList>
            <person name="Bhaya D."/>
            <person name="Grossman A.R."/>
            <person name="Steunou A.-S."/>
            <person name="Khuri N."/>
            <person name="Cohan F.M."/>
            <person name="Hamamura N."/>
            <person name="Melendrez M.C."/>
            <person name="Bateson M.M."/>
            <person name="Ward D.M."/>
            <person name="Heidelberg J.F."/>
        </authorList>
    </citation>
    <scope>NUCLEOTIDE SEQUENCE [LARGE SCALE GENOMIC DNA]</scope>
    <source>
        <strain>JA-3-3Ab</strain>
    </source>
</reference>
<comment type="catalytic activity">
    <reaction evidence="1">
        <text>tRNA(Phe) + L-phenylalanine + ATP = L-phenylalanyl-tRNA(Phe) + AMP + diphosphate + H(+)</text>
        <dbReference type="Rhea" id="RHEA:19413"/>
        <dbReference type="Rhea" id="RHEA-COMP:9668"/>
        <dbReference type="Rhea" id="RHEA-COMP:9699"/>
        <dbReference type="ChEBI" id="CHEBI:15378"/>
        <dbReference type="ChEBI" id="CHEBI:30616"/>
        <dbReference type="ChEBI" id="CHEBI:33019"/>
        <dbReference type="ChEBI" id="CHEBI:58095"/>
        <dbReference type="ChEBI" id="CHEBI:78442"/>
        <dbReference type="ChEBI" id="CHEBI:78531"/>
        <dbReference type="ChEBI" id="CHEBI:456215"/>
        <dbReference type="EC" id="6.1.1.20"/>
    </reaction>
</comment>
<comment type="cofactor">
    <cofactor evidence="1">
        <name>Mg(2+)</name>
        <dbReference type="ChEBI" id="CHEBI:18420"/>
    </cofactor>
    <text evidence="1">Binds 2 magnesium ions per tetramer.</text>
</comment>
<comment type="subunit">
    <text evidence="1">Tetramer of two alpha and two beta subunits.</text>
</comment>
<comment type="subcellular location">
    <subcellularLocation>
        <location evidence="1">Cytoplasm</location>
    </subcellularLocation>
</comment>
<comment type="similarity">
    <text evidence="1">Belongs to the phenylalanyl-tRNA synthetase beta subunit family. Type 1 subfamily.</text>
</comment>
<gene>
    <name evidence="1" type="primary">pheT</name>
    <name type="ordered locus">CYA_0309</name>
</gene>
<proteinExistence type="inferred from homology"/>
<keyword id="KW-0030">Aminoacyl-tRNA synthetase</keyword>
<keyword id="KW-0067">ATP-binding</keyword>
<keyword id="KW-0963">Cytoplasm</keyword>
<keyword id="KW-0436">Ligase</keyword>
<keyword id="KW-0460">Magnesium</keyword>
<keyword id="KW-0479">Metal-binding</keyword>
<keyword id="KW-0547">Nucleotide-binding</keyword>
<keyword id="KW-0648">Protein biosynthesis</keyword>
<keyword id="KW-0694">RNA-binding</keyword>
<keyword id="KW-0820">tRNA-binding</keyword>
<organism>
    <name type="scientific">Synechococcus sp. (strain JA-3-3Ab)</name>
    <name type="common">Cyanobacteria bacterium Yellowstone A-Prime</name>
    <dbReference type="NCBI Taxonomy" id="321327"/>
    <lineage>
        <taxon>Bacteria</taxon>
        <taxon>Bacillati</taxon>
        <taxon>Cyanobacteriota</taxon>
        <taxon>Cyanophyceae</taxon>
        <taxon>Synechococcales</taxon>
        <taxon>Synechococcaceae</taxon>
        <taxon>Synechococcus</taxon>
    </lineage>
</organism>
<accession>Q2JXF6</accession>
<evidence type="ECO:0000255" key="1">
    <source>
        <dbReference type="HAMAP-Rule" id="MF_00283"/>
    </source>
</evidence>
<protein>
    <recommendedName>
        <fullName evidence="1">Phenylalanine--tRNA ligase beta subunit</fullName>
        <ecNumber evidence="1">6.1.1.20</ecNumber>
    </recommendedName>
    <alternativeName>
        <fullName evidence="1">Phenylalanyl-tRNA synthetase beta subunit</fullName>
        <shortName evidence="1">PheRS</shortName>
    </alternativeName>
</protein>
<feature type="chain" id="PRO_0000232826" description="Phenylalanine--tRNA ligase beta subunit">
    <location>
        <begin position="1"/>
        <end position="825"/>
    </location>
</feature>
<feature type="domain" description="tRNA-binding" evidence="1">
    <location>
        <begin position="39"/>
        <end position="154"/>
    </location>
</feature>
<feature type="domain" description="B5" evidence="1">
    <location>
        <begin position="411"/>
        <end position="506"/>
    </location>
</feature>
<feature type="domain" description="FDX-ACB" evidence="1">
    <location>
        <begin position="731"/>
        <end position="824"/>
    </location>
</feature>
<feature type="binding site" evidence="1">
    <location>
        <position position="484"/>
    </location>
    <ligand>
        <name>Mg(2+)</name>
        <dbReference type="ChEBI" id="CHEBI:18420"/>
        <note>shared with alpha subunit</note>
    </ligand>
</feature>
<feature type="binding site" evidence="1">
    <location>
        <position position="490"/>
    </location>
    <ligand>
        <name>Mg(2+)</name>
        <dbReference type="ChEBI" id="CHEBI:18420"/>
        <note>shared with alpha subunit</note>
    </ligand>
</feature>
<feature type="binding site" evidence="1">
    <location>
        <position position="493"/>
    </location>
    <ligand>
        <name>Mg(2+)</name>
        <dbReference type="ChEBI" id="CHEBI:18420"/>
        <note>shared with alpha subunit</note>
    </ligand>
</feature>
<feature type="binding site" evidence="1">
    <location>
        <position position="494"/>
    </location>
    <ligand>
        <name>Mg(2+)</name>
        <dbReference type="ChEBI" id="CHEBI:18420"/>
        <note>shared with alpha subunit</note>
    </ligand>
</feature>